<accession>Q13123</accession>
<accession>Q6IPD8</accession>
<feature type="chain" id="PRO_0000097235" description="Protein Red">
    <location>
        <begin position="1"/>
        <end position="557"/>
    </location>
</feature>
<feature type="repeat" description="1">
    <location>
        <begin position="342"/>
        <end position="343"/>
    </location>
</feature>
<feature type="repeat" description="2">
    <location>
        <begin position="344"/>
        <end position="345"/>
    </location>
</feature>
<feature type="repeat" description="3">
    <location>
        <begin position="346"/>
        <end position="347"/>
    </location>
</feature>
<feature type="repeat" description="4">
    <location>
        <begin position="348"/>
        <end position="349"/>
    </location>
</feature>
<feature type="repeat" description="5">
    <location>
        <begin position="350"/>
        <end position="351"/>
    </location>
</feature>
<feature type="repeat" description="6">
    <location>
        <begin position="352"/>
        <end position="353"/>
    </location>
</feature>
<feature type="repeat" description="7">
    <location>
        <begin position="354"/>
        <end position="355"/>
    </location>
</feature>
<feature type="repeat" description="8">
    <location>
        <begin position="356"/>
        <end position="357"/>
    </location>
</feature>
<feature type="repeat" description="9">
    <location>
        <begin position="358"/>
        <end position="359"/>
    </location>
</feature>
<feature type="repeat" description="10">
    <location>
        <begin position="360"/>
        <end position="361"/>
    </location>
</feature>
<feature type="repeat" description="11">
    <location>
        <begin position="362"/>
        <end position="363"/>
    </location>
</feature>
<feature type="repeat" description="12">
    <location>
        <begin position="364"/>
        <end position="365"/>
    </location>
</feature>
<feature type="repeat" description="13">
    <location>
        <begin position="366"/>
        <end position="367"/>
    </location>
</feature>
<feature type="repeat" description="14">
    <location>
        <begin position="368"/>
        <end position="369"/>
    </location>
</feature>
<feature type="repeat" description="15">
    <location>
        <begin position="370"/>
        <end position="371"/>
    </location>
</feature>
<feature type="repeat" description="16">
    <location>
        <begin position="372"/>
        <end position="373"/>
    </location>
</feature>
<feature type="repeat" description="17">
    <location>
        <begin position="374"/>
        <end position="375"/>
    </location>
</feature>
<feature type="region of interest" description="Disordered" evidence="2">
    <location>
        <begin position="1"/>
        <end position="84"/>
    </location>
</feature>
<feature type="region of interest" description="Disordered" evidence="2">
    <location>
        <begin position="181"/>
        <end position="205"/>
    </location>
</feature>
<feature type="region of interest" description="Disordered" evidence="2">
    <location>
        <begin position="294"/>
        <end position="403"/>
    </location>
</feature>
<feature type="region of interest" description="17 X 2 AA tandem repeats of R-[ED]">
    <location>
        <begin position="342"/>
        <end position="375"/>
    </location>
</feature>
<feature type="compositionally biased region" description="Basic and acidic residues" evidence="2">
    <location>
        <begin position="16"/>
        <end position="25"/>
    </location>
</feature>
<feature type="compositionally biased region" description="Low complexity" evidence="2">
    <location>
        <begin position="42"/>
        <end position="53"/>
    </location>
</feature>
<feature type="compositionally biased region" description="Basic residues" evidence="2">
    <location>
        <begin position="294"/>
        <end position="303"/>
    </location>
</feature>
<feature type="compositionally biased region" description="Basic and acidic residues" evidence="2">
    <location>
        <begin position="304"/>
        <end position="313"/>
    </location>
</feature>
<feature type="compositionally biased region" description="Basic and acidic residues" evidence="2">
    <location>
        <begin position="332"/>
        <end position="398"/>
    </location>
</feature>
<feature type="modified residue" description="N6-acetyllysine" evidence="18">
    <location>
        <position position="98"/>
    </location>
</feature>
<feature type="modified residue" description="N6-acetyllysine" evidence="1">
    <location>
        <position position="137"/>
    </location>
</feature>
<feature type="modified residue" description="Phosphoserine" evidence="19">
    <location>
        <position position="287"/>
    </location>
</feature>
<feature type="modified residue" description="Phosphoserine" evidence="19">
    <location>
        <position position="417"/>
    </location>
</feature>
<feature type="modified residue" description="Phosphoserine" evidence="17">
    <location>
        <position position="460"/>
    </location>
</feature>
<feature type="modified residue" description="Phosphothreonine" evidence="16">
    <location>
        <position position="485"/>
    </location>
</feature>
<feature type="modified residue" description="Phosphoserine" evidence="19">
    <location>
        <position position="536"/>
    </location>
</feature>
<feature type="cross-link" description="Glycyl lysine isopeptide (Lys-Gly) (interchain with G-Cter in SUMO2)" evidence="21">
    <location>
        <position position="151"/>
    </location>
</feature>
<feature type="cross-link" description="Glycyl lysine isopeptide (Lys-Gly) (interchain with G-Cter in SUMO2)" evidence="21">
    <location>
        <position position="310"/>
    </location>
</feature>
<feature type="cross-link" description="Glycyl lysine isopeptide (Lys-Gly) (interchain with G-Cter in SUMO2)" evidence="21">
    <location>
        <position position="331"/>
    </location>
</feature>
<feature type="cross-link" description="Glycyl lysine isopeptide (Lys-Gly) (interchain with G-Cter in SUMO2)" evidence="21">
    <location>
        <position position="386"/>
    </location>
</feature>
<feature type="cross-link" description="Glycyl lysine isopeptide (Lys-Gly) (interchain with G-Cter in SUMO2)" evidence="21">
    <location>
        <position position="388"/>
    </location>
</feature>
<feature type="cross-link" description="Glycyl lysine isopeptide (Lys-Gly) (interchain with G-Cter in SUMO2)" evidence="21">
    <location>
        <position position="404"/>
    </location>
</feature>
<feature type="cross-link" description="Glycyl lysine isopeptide (Lys-Gly) (interchain with G-Cter in SUMO2)" evidence="21">
    <location>
        <position position="408"/>
    </location>
</feature>
<feature type="cross-link" description="Glycyl lysine isopeptide (Lys-Gly) (interchain with G-Cter in SUMO2)" evidence="21">
    <location>
        <position position="496"/>
    </location>
</feature>
<feature type="cross-link" description="Glycyl lysine isopeptide (Lys-Gly) (interchain with G-Cter in SUMO2)" evidence="21">
    <location>
        <position position="501"/>
    </location>
</feature>
<feature type="cross-link" description="Glycyl lysine isopeptide (Lys-Gly) (interchain with G-Cter in SUMO2)" evidence="21">
    <location>
        <position position="509"/>
    </location>
</feature>
<feature type="cross-link" description="Glycyl lysine isopeptide (Lys-Gly) (interchain with G-Cter in SUMO2)" evidence="21">
    <location>
        <position position="541"/>
    </location>
</feature>
<feature type="cross-link" description="Glycyl lysine isopeptide (Lys-Gly) (interchain with G-Cter in SUMO2)" evidence="21">
    <location>
        <position position="543"/>
    </location>
</feature>
<feature type="cross-link" description="Glycyl lysine isopeptide (Lys-Gly) (interchain with G-Cter in SUMO2)" evidence="20 21">
    <location>
        <position position="544"/>
    </location>
</feature>
<feature type="cross-link" description="Glycyl lysine isopeptide (Lys-Gly) (interchain with G-Cter in SUMO2)" evidence="21">
    <location>
        <position position="553"/>
    </location>
</feature>
<feature type="sequence conflict" description="In Ref. 1; CAA06607." evidence="11" ref="1">
    <original>A</original>
    <variation>L</variation>
    <location>
        <position position="176"/>
    </location>
</feature>
<feature type="sequence conflict" description="In Ref. 1; CAA06607." evidence="11" ref="1">
    <original>E</original>
    <variation>D</variation>
    <location>
        <position position="182"/>
    </location>
</feature>
<feature type="helix" evidence="22">
    <location>
        <begin position="212"/>
        <end position="220"/>
    </location>
</feature>
<feature type="strand" evidence="22">
    <location>
        <begin position="233"/>
        <end position="236"/>
    </location>
</feature>
<feature type="strand" evidence="22">
    <location>
        <begin position="238"/>
        <end position="240"/>
    </location>
</feature>
<feature type="strand" evidence="22">
    <location>
        <begin position="254"/>
        <end position="256"/>
    </location>
</feature>
<protein>
    <recommendedName>
        <fullName evidence="9">Protein Red</fullName>
    </recommendedName>
    <alternativeName>
        <fullName evidence="10">Cytokine IK</fullName>
    </alternativeName>
    <alternativeName>
        <fullName evidence="10">IK factor</fullName>
    </alternativeName>
    <alternativeName>
        <fullName>Protein RER</fullName>
    </alternativeName>
</protein>
<evidence type="ECO:0000250" key="1">
    <source>
        <dbReference type="UniProtKB" id="Q9Z1M8"/>
    </source>
</evidence>
<evidence type="ECO:0000256" key="2">
    <source>
        <dbReference type="SAM" id="MobiDB-lite"/>
    </source>
</evidence>
<evidence type="ECO:0000269" key="3">
    <source>
    </source>
</evidence>
<evidence type="ECO:0000269" key="4">
    <source>
    </source>
</evidence>
<evidence type="ECO:0000269" key="5">
    <source>
    </source>
</evidence>
<evidence type="ECO:0000269" key="6">
    <source>
    </source>
</evidence>
<evidence type="ECO:0000269" key="7">
    <source>
    </source>
</evidence>
<evidence type="ECO:0000269" key="8">
    <source>
    </source>
</evidence>
<evidence type="ECO:0000303" key="9">
    <source>
    </source>
</evidence>
<evidence type="ECO:0000303" key="10">
    <source>
    </source>
</evidence>
<evidence type="ECO:0000305" key="11"/>
<evidence type="ECO:0000305" key="12">
    <source>
    </source>
</evidence>
<evidence type="ECO:0000305" key="13">
    <source>
    </source>
</evidence>
<evidence type="ECO:0000305" key="14">
    <source>
    </source>
</evidence>
<evidence type="ECO:0007744" key="15">
    <source>
        <dbReference type="PDB" id="5O9Z"/>
    </source>
</evidence>
<evidence type="ECO:0007744" key="16">
    <source>
    </source>
</evidence>
<evidence type="ECO:0007744" key="17">
    <source>
    </source>
</evidence>
<evidence type="ECO:0007744" key="18">
    <source>
    </source>
</evidence>
<evidence type="ECO:0007744" key="19">
    <source>
    </source>
</evidence>
<evidence type="ECO:0007744" key="20">
    <source>
    </source>
</evidence>
<evidence type="ECO:0007744" key="21">
    <source>
    </source>
</evidence>
<evidence type="ECO:0007829" key="22">
    <source>
        <dbReference type="PDB" id="6Q8I"/>
    </source>
</evidence>
<organism>
    <name type="scientific">Homo sapiens</name>
    <name type="common">Human</name>
    <dbReference type="NCBI Taxonomy" id="9606"/>
    <lineage>
        <taxon>Eukaryota</taxon>
        <taxon>Metazoa</taxon>
        <taxon>Chordata</taxon>
        <taxon>Craniata</taxon>
        <taxon>Vertebrata</taxon>
        <taxon>Euteleostomi</taxon>
        <taxon>Mammalia</taxon>
        <taxon>Eutheria</taxon>
        <taxon>Euarchontoglires</taxon>
        <taxon>Primates</taxon>
        <taxon>Haplorrhini</taxon>
        <taxon>Catarrhini</taxon>
        <taxon>Hominidae</taxon>
        <taxon>Homo</taxon>
    </lineage>
</organism>
<comment type="function">
    <text evidence="4 6 7 8 11">Involved in pre-mRNA splicing as a component of the spliceosome (PubMed:28781166). Auxiliary spliceosomal protein that regulates selection of alternative splice sites in a small set of target pre-mRNA species (Probable). Required for normal mitotic cell cycle progression (PubMed:22351768, PubMed:24252166). Recruits MAD1L1 and MAD2L1 to kinetochores, and is required to trigger the spindle assembly checkpoint (PubMed:22351768). Required for normal accumulation of SMU1 (PubMed:24945353).</text>
</comment>
<comment type="function">
    <text evidence="7">(Microbial infection) Required, together with SMU1, for normal splicing of influenza A virus NS1 pre-mRNA, which is required for the production of the exportin NS2 and for the production of influenza A virus particles. Not required for the production of VSV virus particles.</text>
</comment>
<comment type="subunit">
    <text evidence="5">(Microbial infection) Identified in a complex with SMU1 and influenza A virus RNA polymerase subunits PB1 and PB2. Directly interacts with SMU1 and with influenza A virus RNA polymerase subunits PB1 and PB2.</text>
</comment>
<comment type="subunit">
    <text evidence="4 7 8 12 13">Component of the spliceosome B complex (PubMed:22365833, PubMed:28781166). Interacts with SMU1 (PubMed:22365833, PubMed:24945353). Interacts with MAD1L1 (PubMed:22351768). May interact with DHX15 (PubMed:24252166).</text>
</comment>
<comment type="interaction">
    <interactant intactId="EBI-713456">
        <id>Q13123</id>
    </interactant>
    <interactant intactId="EBI-448680">
        <id>O14965</id>
        <label>AURKA</label>
    </interactant>
    <organismsDiffer>false</organismsDiffer>
    <experiments>3</experiments>
</comment>
<comment type="interaction">
    <interactant intactId="EBI-713456">
        <id>Q13123</id>
    </interactant>
    <interactant intactId="EBI-739624">
        <id>Q8NHQ1</id>
        <label>CEP70</label>
    </interactant>
    <organismsDiffer>false</organismsDiffer>
    <experiments>3</experiments>
</comment>
<comment type="interaction">
    <interactant intactId="EBI-713456">
        <id>Q13123</id>
    </interactant>
    <interactant intactId="EBI-351257">
        <id>P26196</id>
        <label>DDX6</label>
    </interactant>
    <organismsDiffer>false</organismsDiffer>
    <experiments>4</experiments>
</comment>
<comment type="interaction">
    <interactant intactId="EBI-713456">
        <id>Q13123</id>
    </interactant>
    <interactant intactId="EBI-1053164">
        <id>O75190</id>
        <label>DNAJB6</label>
    </interactant>
    <organismsDiffer>false</organismsDiffer>
    <experiments>3</experiments>
</comment>
<comment type="interaction">
    <interactant intactId="EBI-713456">
        <id>Q13123</id>
    </interactant>
    <interactant intactId="EBI-750300">
        <id>Q01658</id>
        <label>DR1</label>
    </interactant>
    <organismsDiffer>false</organismsDiffer>
    <experiments>3</experiments>
</comment>
<comment type="interaction">
    <interactant intactId="EBI-713456">
        <id>Q13123</id>
    </interactant>
    <interactant intactId="EBI-357897">
        <id>Q15029</id>
        <label>EFTUD2</label>
    </interactant>
    <organismsDiffer>false</organismsDiffer>
    <experiments>3</experiments>
</comment>
<comment type="interaction">
    <interactant intactId="EBI-713456">
        <id>Q13123</id>
    </interactant>
    <interactant intactId="EBI-1175354">
        <id>Q9H6Z9</id>
        <label>EGLN3</label>
    </interactant>
    <organismsDiffer>false</organismsDiffer>
    <experiments>3</experiments>
</comment>
<comment type="interaction">
    <interactant intactId="EBI-713456">
        <id>Q13123</id>
    </interactant>
    <interactant intactId="EBI-710176">
        <id>Q70Z53</id>
        <label>FRA10AC1</label>
    </interactant>
    <organismsDiffer>false</organismsDiffer>
    <experiments>2</experiments>
</comment>
<comment type="interaction">
    <interactant intactId="EBI-713456">
        <id>Q13123</id>
    </interactant>
    <interactant intactId="EBI-389564">
        <id>Q00403</id>
        <label>GTF2B</label>
    </interactant>
    <organismsDiffer>false</organismsDiffer>
    <experiments>3</experiments>
</comment>
<comment type="interaction">
    <interactant intactId="EBI-713456">
        <id>Q13123</id>
    </interactant>
    <interactant intactId="EBI-713456">
        <id>Q13123</id>
        <label>IK</label>
    </interactant>
    <organismsDiffer>false</organismsDiffer>
    <experiments>2</experiments>
</comment>
<comment type="interaction">
    <interactant intactId="EBI-713456">
        <id>Q13123</id>
    </interactant>
    <interactant intactId="EBI-351935">
        <id>P02545</id>
        <label>LMNA</label>
    </interactant>
    <organismsDiffer>false</organismsDiffer>
    <experiments>3</experiments>
</comment>
<comment type="interaction">
    <interactant intactId="EBI-713456">
        <id>Q13123</id>
    </interactant>
    <interactant intactId="EBI-11978579">
        <id>O95983-2</id>
        <label>MBD3</label>
    </interactant>
    <organismsDiffer>false</organismsDiffer>
    <experiments>3</experiments>
</comment>
<comment type="interaction">
    <interactant intactId="EBI-713456">
        <id>Q13123</id>
    </interactant>
    <interactant intactId="EBI-1048159">
        <id>P55081</id>
        <label>MFAP1</label>
    </interactant>
    <organismsDiffer>false</organismsDiffer>
    <experiments>2</experiments>
</comment>
<comment type="interaction">
    <interactant intactId="EBI-713456">
        <id>Q13123</id>
    </interactant>
    <interactant intactId="EBI-748974">
        <id>Q96CV9</id>
        <label>OPTN</label>
    </interactant>
    <organismsDiffer>false</organismsDiffer>
    <experiments>3</experiments>
</comment>
<comment type="interaction">
    <interactant intactId="EBI-713456">
        <id>Q13123</id>
    </interactant>
    <interactant intactId="EBI-536755">
        <id>O94906</id>
        <label>PRPF6</label>
    </interactant>
    <organismsDiffer>false</organismsDiffer>
    <experiments>2</experiments>
</comment>
<comment type="interaction">
    <interactant intactId="EBI-713456">
        <id>Q13123</id>
    </interactant>
    <interactant intactId="EBI-347462">
        <id>P47897</id>
        <label>QARS1</label>
    </interactant>
    <organismsDiffer>false</organismsDiffer>
    <experiments>3</experiments>
</comment>
<comment type="interaction">
    <interactant intactId="EBI-713456">
        <id>Q13123</id>
    </interactant>
    <interactant intactId="EBI-721525">
        <id>P98175</id>
        <label>RBM10</label>
    </interactant>
    <organismsDiffer>false</organismsDiffer>
    <experiments>2</experiments>
</comment>
<comment type="interaction">
    <interactant intactId="EBI-713456">
        <id>Q13123</id>
    </interactant>
    <interactant intactId="EBI-2130294">
        <id>O15541</id>
        <label>RNF113A</label>
    </interactant>
    <organismsDiffer>false</organismsDiffer>
    <experiments>2</experiments>
</comment>
<comment type="interaction">
    <interactant intactId="EBI-713456">
        <id>Q13123</id>
    </interactant>
    <interactant intactId="EBI-298027">
        <id>Q2TAY7</id>
        <label>SMU1</label>
    </interactant>
    <organismsDiffer>false</organismsDiffer>
    <experiments>8</experiments>
</comment>
<comment type="interaction">
    <interactant intactId="EBI-713456">
        <id>Q13123</id>
    </interactant>
    <interactant intactId="EBI-749336">
        <id>Q8TAD8</id>
        <label>SNIP1</label>
    </interactant>
    <organismsDiffer>false</organismsDiffer>
    <experiments>2</experiments>
</comment>
<comment type="interaction">
    <interactant intactId="EBI-713456">
        <id>Q13123</id>
    </interactant>
    <interactant intactId="EBI-5235340">
        <id>Q7Z699</id>
        <label>SPRED1</label>
    </interactant>
    <organismsDiffer>false</organismsDiffer>
    <experiments>3</experiments>
</comment>
<comment type="interaction">
    <interactant intactId="EBI-713456">
        <id>Q13123</id>
    </interactant>
    <interactant intactId="EBI-295232">
        <id>Q9HCS7</id>
        <label>XAB2</label>
    </interactant>
    <organismsDiffer>false</organismsDiffer>
    <experiments>2</experiments>
</comment>
<comment type="interaction">
    <interactant intactId="EBI-713456">
        <id>Q13123</id>
    </interactant>
    <interactant intactId="EBI-3920997">
        <id>Q96NB3</id>
        <label>ZNF830</label>
    </interactant>
    <organismsDiffer>false</organismsDiffer>
    <experiments>2</experiments>
</comment>
<comment type="interaction">
    <interactant intactId="EBI-713456">
        <id>Q13123</id>
    </interactant>
    <interactant intactId="EBI-6164309">
        <id>P04618</id>
        <label>rev</label>
    </interactant>
    <organismsDiffer>true</organismsDiffer>
    <experiments>3</experiments>
</comment>
<comment type="subcellular location">
    <subcellularLocation>
        <location evidence="7 8">Nucleus</location>
    </subcellularLocation>
    <subcellularLocation>
        <location evidence="6 7">Nucleus</location>
        <location evidence="6 7">Nucleoplasm</location>
    </subcellularLocation>
    <subcellularLocation>
        <location evidence="6">Chromosome</location>
    </subcellularLocation>
    <subcellularLocation>
        <location evidence="4">Cytoplasm</location>
        <location evidence="4">Cytoskeleton</location>
        <location evidence="4">Spindle pole</location>
    </subcellularLocation>
    <text evidence="6">Predominantly present throughout the nucleoplasm during prometaphase, metaphase and anaphase. Is also detected in nuclear foci that are not identical with Cajal bodies. Starts to accumulate at chromosomes during telophase, and is nearly exclusively associated with chromosomes in newly divided cells (PubMed:24252166). Colocalizes with MAD1L1 at mitotic spindle poles during metaphase and anaphase (PubMed:22351768).</text>
</comment>
<comment type="tissue specificity">
    <text evidence="3">Ubiquitous.</text>
</comment>
<comment type="developmental stage">
    <text evidence="3">Expressed at similar levels in fetal and adult tissues.</text>
</comment>
<comment type="induction">
    <text evidence="4">Up-regulated during mitosis (at protein level).</text>
</comment>
<comment type="similarity">
    <text evidence="11">Belongs to the RED family.</text>
</comment>
<comment type="caution">
    <text evidence="14">Was originally thought to be the IK factor, a cytokine involved in the negative regulatory pathway of constitutive MHC class II antigens expression.</text>
</comment>
<dbReference type="EMBL" id="AJ005579">
    <property type="protein sequence ID" value="CAA06607.1"/>
    <property type="molecule type" value="mRNA"/>
</dbReference>
<dbReference type="EMBL" id="AC116353">
    <property type="status" value="NOT_ANNOTATED_CDS"/>
    <property type="molecule type" value="Genomic_DNA"/>
</dbReference>
<dbReference type="EMBL" id="BC071964">
    <property type="protein sequence ID" value="AAH71964.1"/>
    <property type="molecule type" value="mRNA"/>
</dbReference>
<dbReference type="EMBL" id="S74221">
    <property type="protein sequence ID" value="AAB32531.1"/>
    <property type="molecule type" value="mRNA"/>
</dbReference>
<dbReference type="CCDS" id="CCDS47280.1"/>
<dbReference type="PIR" id="I58408">
    <property type="entry name" value="I58408"/>
</dbReference>
<dbReference type="RefSeq" id="NP_006074.2">
    <property type="nucleotide sequence ID" value="NM_006083.4"/>
</dbReference>
<dbReference type="PDB" id="5O9Z">
    <property type="method" value="EM"/>
    <property type="resolution" value="4.50 A"/>
    <property type="chains" value="R=1-557"/>
</dbReference>
<dbReference type="PDB" id="6Q8I">
    <property type="method" value="X-ray"/>
    <property type="resolution" value="3.17 A"/>
    <property type="chains" value="C/D/G/H/K/L/O/P=1-557"/>
</dbReference>
<dbReference type="PDB" id="8QO9">
    <property type="method" value="EM"/>
    <property type="resolution" value="5.29 A"/>
    <property type="chains" value="x/y=1-557"/>
</dbReference>
<dbReference type="PDB" id="8QZS">
    <property type="method" value="EM"/>
    <property type="resolution" value="4.10 A"/>
    <property type="chains" value="x/y=1-557"/>
</dbReference>
<dbReference type="PDBsum" id="5O9Z"/>
<dbReference type="PDBsum" id="6Q8I"/>
<dbReference type="PDBsum" id="8QO9"/>
<dbReference type="PDBsum" id="8QZS"/>
<dbReference type="EMDB" id="EMD-18529"/>
<dbReference type="EMDB" id="EMD-18781"/>
<dbReference type="EMDB" id="EMD-3766"/>
<dbReference type="SMR" id="Q13123"/>
<dbReference type="BioGRID" id="109766">
    <property type="interactions" value="253"/>
</dbReference>
<dbReference type="FunCoup" id="Q13123">
    <property type="interactions" value="2918"/>
</dbReference>
<dbReference type="IntAct" id="Q13123">
    <property type="interactions" value="117"/>
</dbReference>
<dbReference type="MINT" id="Q13123"/>
<dbReference type="STRING" id="9606.ENSP00000396301"/>
<dbReference type="BindingDB" id="Q13123"/>
<dbReference type="ChEMBL" id="CHEMBL2321616"/>
<dbReference type="GlyGen" id="Q13123">
    <property type="glycosylation" value="2 sites, 1 O-linked glycan (1 site)"/>
</dbReference>
<dbReference type="iPTMnet" id="Q13123"/>
<dbReference type="MetOSite" id="Q13123"/>
<dbReference type="PhosphoSitePlus" id="Q13123"/>
<dbReference type="SwissPalm" id="Q13123"/>
<dbReference type="BioMuta" id="IK"/>
<dbReference type="DMDM" id="296452987"/>
<dbReference type="jPOST" id="Q13123"/>
<dbReference type="MassIVE" id="Q13123"/>
<dbReference type="PaxDb" id="9606-ENSP00000396301"/>
<dbReference type="PeptideAtlas" id="Q13123"/>
<dbReference type="ProteomicsDB" id="59173"/>
<dbReference type="Pumba" id="Q13123"/>
<dbReference type="Antibodypedia" id="7468">
    <property type="antibodies" value="132 antibodies from 28 providers"/>
</dbReference>
<dbReference type="DNASU" id="3550"/>
<dbReference type="Ensembl" id="ENST00000417647.7">
    <property type="protein sequence ID" value="ENSP00000396301.2"/>
    <property type="gene ID" value="ENSG00000113141.19"/>
</dbReference>
<dbReference type="GeneID" id="3550"/>
<dbReference type="KEGG" id="hsa:3550"/>
<dbReference type="MANE-Select" id="ENST00000417647.7">
    <property type="protein sequence ID" value="ENSP00000396301.2"/>
    <property type="RefSeq nucleotide sequence ID" value="NM_006083.4"/>
    <property type="RefSeq protein sequence ID" value="NP_006074.2"/>
</dbReference>
<dbReference type="UCSC" id="uc003lgq.4">
    <property type="organism name" value="human"/>
</dbReference>
<dbReference type="AGR" id="HGNC:5958"/>
<dbReference type="CTD" id="3550"/>
<dbReference type="DisGeNET" id="3550"/>
<dbReference type="GeneCards" id="IK"/>
<dbReference type="HGNC" id="HGNC:5958">
    <property type="gene designation" value="IK"/>
</dbReference>
<dbReference type="HPA" id="ENSG00000113141">
    <property type="expression patterns" value="Low tissue specificity"/>
</dbReference>
<dbReference type="MIM" id="600549">
    <property type="type" value="gene"/>
</dbReference>
<dbReference type="neXtProt" id="NX_Q13123"/>
<dbReference type="OpenTargets" id="ENSG00000113141"/>
<dbReference type="PharmGKB" id="PA29774"/>
<dbReference type="VEuPathDB" id="HostDB:ENSG00000113141"/>
<dbReference type="eggNOG" id="KOG2498">
    <property type="taxonomic scope" value="Eukaryota"/>
</dbReference>
<dbReference type="GeneTree" id="ENSGT00940000153727"/>
<dbReference type="HOGENOM" id="CLU_026814_2_0_1"/>
<dbReference type="InParanoid" id="Q13123"/>
<dbReference type="OMA" id="WQQTNGY"/>
<dbReference type="OrthoDB" id="3366823at2759"/>
<dbReference type="PAN-GO" id="Q13123">
    <property type="GO annotations" value="2 GO annotations based on evolutionary models"/>
</dbReference>
<dbReference type="PhylomeDB" id="Q13123"/>
<dbReference type="TreeFam" id="TF321907"/>
<dbReference type="PathwayCommons" id="Q13123"/>
<dbReference type="Reactome" id="R-HSA-72163">
    <property type="pathway name" value="mRNA Splicing - Major Pathway"/>
</dbReference>
<dbReference type="SignaLink" id="Q13123"/>
<dbReference type="BioGRID-ORCS" id="3550">
    <property type="hits" value="633 hits in 1161 CRISPR screens"/>
</dbReference>
<dbReference type="CD-CODE" id="8C2F96ED">
    <property type="entry name" value="Centrosome"/>
</dbReference>
<dbReference type="CD-CODE" id="DEE660B4">
    <property type="entry name" value="Stress granule"/>
</dbReference>
<dbReference type="ChiTaRS" id="IK">
    <property type="organism name" value="human"/>
</dbReference>
<dbReference type="GeneWiki" id="IK_(gene)"/>
<dbReference type="GenomeRNAi" id="3550"/>
<dbReference type="Pharos" id="Q13123">
    <property type="development level" value="Tbio"/>
</dbReference>
<dbReference type="PRO" id="PR:Q13123"/>
<dbReference type="Proteomes" id="UP000005640">
    <property type="component" value="Chromosome 5"/>
</dbReference>
<dbReference type="RNAct" id="Q13123">
    <property type="molecule type" value="protein"/>
</dbReference>
<dbReference type="Bgee" id="ENSG00000113141">
    <property type="expression patterns" value="Expressed in tendon of biceps brachii and 211 other cell types or tissues"/>
</dbReference>
<dbReference type="ExpressionAtlas" id="Q13123">
    <property type="expression patterns" value="baseline and differential"/>
</dbReference>
<dbReference type="GO" id="GO:0005694">
    <property type="term" value="C:chromosome"/>
    <property type="evidence" value="ECO:0007669"/>
    <property type="project" value="UniProtKB-SubCell"/>
</dbReference>
<dbReference type="GO" id="GO:0005737">
    <property type="term" value="C:cytoplasm"/>
    <property type="evidence" value="ECO:0007669"/>
    <property type="project" value="UniProtKB-KW"/>
</dbReference>
<dbReference type="GO" id="GO:0016607">
    <property type="term" value="C:nuclear speck"/>
    <property type="evidence" value="ECO:0000314"/>
    <property type="project" value="HPA"/>
</dbReference>
<dbReference type="GO" id="GO:0005654">
    <property type="term" value="C:nucleoplasm"/>
    <property type="evidence" value="ECO:0000314"/>
    <property type="project" value="UniProtKB"/>
</dbReference>
<dbReference type="GO" id="GO:0005634">
    <property type="term" value="C:nucleus"/>
    <property type="evidence" value="ECO:0000314"/>
    <property type="project" value="UniProtKB"/>
</dbReference>
<dbReference type="GO" id="GO:0000922">
    <property type="term" value="C:spindle pole"/>
    <property type="evidence" value="ECO:0007669"/>
    <property type="project" value="UniProtKB-SubCell"/>
</dbReference>
<dbReference type="GO" id="GO:0071005">
    <property type="term" value="C:U2-type precatalytic spliceosome"/>
    <property type="evidence" value="ECO:0000314"/>
    <property type="project" value="UniProtKB"/>
</dbReference>
<dbReference type="GO" id="GO:0042802">
    <property type="term" value="F:identical protein binding"/>
    <property type="evidence" value="ECO:0000353"/>
    <property type="project" value="IntAct"/>
</dbReference>
<dbReference type="GO" id="GO:0000278">
    <property type="term" value="P:mitotic cell cycle"/>
    <property type="evidence" value="ECO:0000315"/>
    <property type="project" value="UniProtKB"/>
</dbReference>
<dbReference type="GO" id="GO:0007094">
    <property type="term" value="P:mitotic spindle assembly checkpoint signaling"/>
    <property type="evidence" value="ECO:0000315"/>
    <property type="project" value="UniProtKB"/>
</dbReference>
<dbReference type="GO" id="GO:0000398">
    <property type="term" value="P:mRNA splicing, via spliceosome"/>
    <property type="evidence" value="ECO:0000314"/>
    <property type="project" value="UniProtKB"/>
</dbReference>
<dbReference type="GO" id="GO:0034501">
    <property type="term" value="P:protein localization to kinetochore"/>
    <property type="evidence" value="ECO:0000315"/>
    <property type="project" value="UniProtKB"/>
</dbReference>
<dbReference type="InterPro" id="IPR039896">
    <property type="entry name" value="Red-like"/>
</dbReference>
<dbReference type="InterPro" id="IPR012492">
    <property type="entry name" value="RED_C"/>
</dbReference>
<dbReference type="InterPro" id="IPR012916">
    <property type="entry name" value="RED_N"/>
</dbReference>
<dbReference type="PANTHER" id="PTHR12765">
    <property type="entry name" value="RED PROTEIN IK FACTOR CYTOKINE IK"/>
    <property type="match status" value="1"/>
</dbReference>
<dbReference type="Pfam" id="PF07807">
    <property type="entry name" value="RED_C"/>
    <property type="match status" value="1"/>
</dbReference>
<dbReference type="Pfam" id="PF07808">
    <property type="entry name" value="RED_N"/>
    <property type="match status" value="1"/>
</dbReference>
<proteinExistence type="evidence at protein level"/>
<gene>
    <name type="primary">IK</name>
    <name evidence="9" type="synonym">RED</name>
    <name type="synonym">RER</name>
</gene>
<reference key="1">
    <citation type="journal article" date="1999" name="Gene">
        <title>Isolation, sequencing and expression of RED, a novel human gene encoding an acidic-basic dipeptide repeat.</title>
        <authorList>
            <person name="Assier E."/>
            <person name="Bouzinba-Segard H."/>
            <person name="Stolzenberg M.-C."/>
            <person name="Stephens R."/>
            <person name="Bardos J."/>
            <person name="Freemont P."/>
            <person name="Charron D."/>
            <person name="Trowsdale J."/>
            <person name="Rich T."/>
        </authorList>
    </citation>
    <scope>NUCLEOTIDE SEQUENCE [MRNA]</scope>
    <scope>TISSUE SPECIFICITY</scope>
    <scope>DEVELOPMENTAL STAGE</scope>
    <source>
        <tissue>Leukemia</tissue>
    </source>
</reference>
<reference key="2">
    <citation type="journal article" date="2004" name="Nature">
        <title>The DNA sequence and comparative analysis of human chromosome 5.</title>
        <authorList>
            <person name="Schmutz J."/>
            <person name="Martin J."/>
            <person name="Terry A."/>
            <person name="Couronne O."/>
            <person name="Grimwood J."/>
            <person name="Lowry S."/>
            <person name="Gordon L.A."/>
            <person name="Scott D."/>
            <person name="Xie G."/>
            <person name="Huang W."/>
            <person name="Hellsten U."/>
            <person name="Tran-Gyamfi M."/>
            <person name="She X."/>
            <person name="Prabhakar S."/>
            <person name="Aerts A."/>
            <person name="Altherr M."/>
            <person name="Bajorek E."/>
            <person name="Black S."/>
            <person name="Branscomb E."/>
            <person name="Caoile C."/>
            <person name="Challacombe J.F."/>
            <person name="Chan Y.M."/>
            <person name="Denys M."/>
            <person name="Detter J.C."/>
            <person name="Escobar J."/>
            <person name="Flowers D."/>
            <person name="Fotopulos D."/>
            <person name="Glavina T."/>
            <person name="Gomez M."/>
            <person name="Gonzales E."/>
            <person name="Goodstein D."/>
            <person name="Grigoriev I."/>
            <person name="Groza M."/>
            <person name="Hammon N."/>
            <person name="Hawkins T."/>
            <person name="Haydu L."/>
            <person name="Israni S."/>
            <person name="Jett J."/>
            <person name="Kadner K."/>
            <person name="Kimball H."/>
            <person name="Kobayashi A."/>
            <person name="Lopez F."/>
            <person name="Lou Y."/>
            <person name="Martinez D."/>
            <person name="Medina C."/>
            <person name="Morgan J."/>
            <person name="Nandkeshwar R."/>
            <person name="Noonan J.P."/>
            <person name="Pitluck S."/>
            <person name="Pollard M."/>
            <person name="Predki P."/>
            <person name="Priest J."/>
            <person name="Ramirez L."/>
            <person name="Retterer J."/>
            <person name="Rodriguez A."/>
            <person name="Rogers S."/>
            <person name="Salamov A."/>
            <person name="Salazar A."/>
            <person name="Thayer N."/>
            <person name="Tice H."/>
            <person name="Tsai M."/>
            <person name="Ustaszewska A."/>
            <person name="Vo N."/>
            <person name="Wheeler J."/>
            <person name="Wu K."/>
            <person name="Yang J."/>
            <person name="Dickson M."/>
            <person name="Cheng J.-F."/>
            <person name="Eichler E.E."/>
            <person name="Olsen A."/>
            <person name="Pennacchio L.A."/>
            <person name="Rokhsar D.S."/>
            <person name="Richardson P."/>
            <person name="Lucas S.M."/>
            <person name="Myers R.M."/>
            <person name="Rubin E.M."/>
        </authorList>
    </citation>
    <scope>NUCLEOTIDE SEQUENCE [LARGE SCALE GENOMIC DNA]</scope>
</reference>
<reference key="3">
    <citation type="journal article" date="2004" name="Genome Res.">
        <title>The status, quality, and expansion of the NIH full-length cDNA project: the Mammalian Gene Collection (MGC).</title>
        <authorList>
            <consortium name="The MGC Project Team"/>
        </authorList>
    </citation>
    <scope>NUCLEOTIDE SEQUENCE [LARGE SCALE MRNA]</scope>
    <source>
        <tissue>Lung</tissue>
    </source>
</reference>
<reference key="4">
    <citation type="journal article" date="1994" name="Oncogene">
        <title>A new cytokine (IK) down-regulating HLA class II: monoclonal antibodies, cloning and chromosome localization.</title>
        <authorList>
            <person name="Krief P."/>
            <person name="Augery-Bourget Y."/>
            <person name="Plaisance S."/>
            <person name="Merck M.F."/>
            <person name="Assier E."/>
            <person name="Tanchou V."/>
            <person name="Billard M."/>
            <person name="Boucheix C."/>
            <person name="Jasmin C."/>
            <person name="Azzarone B."/>
        </authorList>
    </citation>
    <scope>NUCLEOTIDE SEQUENCE [MRNA] OF 316-477</scope>
    <source>
        <tissue>Leukemia</tissue>
    </source>
</reference>
<reference key="5">
    <citation type="journal article" date="2007" name="Science">
        <title>ATM and ATR substrate analysis reveals extensive protein networks responsive to DNA damage.</title>
        <authorList>
            <person name="Matsuoka S."/>
            <person name="Ballif B.A."/>
            <person name="Smogorzewska A."/>
            <person name="McDonald E.R. III"/>
            <person name="Hurov K.E."/>
            <person name="Luo J."/>
            <person name="Bakalarski C.E."/>
            <person name="Zhao Z."/>
            <person name="Solimini N."/>
            <person name="Lerenthal Y."/>
            <person name="Shiloh Y."/>
            <person name="Gygi S.P."/>
            <person name="Elledge S.J."/>
        </authorList>
    </citation>
    <scope>PHOSPHORYLATION [LARGE SCALE ANALYSIS] AT THR-485</scope>
    <scope>IDENTIFICATION BY MASS SPECTROMETRY [LARGE SCALE ANALYSIS]</scope>
    <source>
        <tissue>Embryonic kidney</tissue>
    </source>
</reference>
<reference key="6">
    <citation type="journal article" date="2008" name="Proc. Natl. Acad. Sci. U.S.A.">
        <title>A quantitative atlas of mitotic phosphorylation.</title>
        <authorList>
            <person name="Dephoure N."/>
            <person name="Zhou C."/>
            <person name="Villen J."/>
            <person name="Beausoleil S.A."/>
            <person name="Bakalarski C.E."/>
            <person name="Elledge S.J."/>
            <person name="Gygi S.P."/>
        </authorList>
    </citation>
    <scope>PHOSPHORYLATION [LARGE SCALE ANALYSIS] AT SER-460</scope>
    <scope>IDENTIFICATION BY MASS SPECTROMETRY [LARGE SCALE ANALYSIS]</scope>
    <source>
        <tissue>Cervix carcinoma</tissue>
    </source>
</reference>
<reference key="7">
    <citation type="journal article" date="2009" name="Anal. Chem.">
        <title>Lys-N and trypsin cover complementary parts of the phosphoproteome in a refined SCX-based approach.</title>
        <authorList>
            <person name="Gauci S."/>
            <person name="Helbig A.O."/>
            <person name="Slijper M."/>
            <person name="Krijgsveld J."/>
            <person name="Heck A.J."/>
            <person name="Mohammed S."/>
        </authorList>
    </citation>
    <scope>IDENTIFICATION BY MASS SPECTROMETRY [LARGE SCALE ANALYSIS]</scope>
</reference>
<reference key="8">
    <citation type="journal article" date="2009" name="Science">
        <title>Lysine acetylation targets protein complexes and co-regulates major cellular functions.</title>
        <authorList>
            <person name="Choudhary C."/>
            <person name="Kumar C."/>
            <person name="Gnad F."/>
            <person name="Nielsen M.L."/>
            <person name="Rehman M."/>
            <person name="Walther T.C."/>
            <person name="Olsen J.V."/>
            <person name="Mann M."/>
        </authorList>
    </citation>
    <scope>ACETYLATION [LARGE SCALE ANALYSIS] AT LYS-98</scope>
    <scope>IDENTIFICATION BY MASS SPECTROMETRY [LARGE SCALE ANALYSIS]</scope>
</reference>
<reference key="9">
    <citation type="journal article" date="2011" name="BMC Syst. Biol.">
        <title>Initial characterization of the human central proteome.</title>
        <authorList>
            <person name="Burkard T.R."/>
            <person name="Planyavsky M."/>
            <person name="Kaupe I."/>
            <person name="Breitwieser F.P."/>
            <person name="Buerckstuemmer T."/>
            <person name="Bennett K.L."/>
            <person name="Superti-Furga G."/>
            <person name="Colinge J."/>
        </authorList>
    </citation>
    <scope>IDENTIFICATION BY MASS SPECTROMETRY [LARGE SCALE ANALYSIS]</scope>
</reference>
<reference key="10">
    <citation type="journal article" date="2012" name="J. Biol. Chem.">
        <title>RED, a spindle pole-associated protein, is required for kinetochore localization of MAD1, mitotic progression, and activation of the spindle assembly checkpoint.</title>
        <authorList>
            <person name="Yeh P.C."/>
            <person name="Yeh C.C."/>
            <person name="Chen Y.C."/>
            <person name="Juang Y.L."/>
        </authorList>
    </citation>
    <scope>FUNCTION</scope>
    <scope>INTERACTION WITH MAD1L1</scope>
    <scope>SUBCELLULAR LOCATION</scope>
    <scope>INDUCTION</scope>
</reference>
<reference key="11">
    <citation type="journal article" date="2012" name="Mol. Cell">
        <title>Dynamic protein-protein interaction wiring of the human spliceosome.</title>
        <authorList>
            <person name="Hegele A."/>
            <person name="Kamburov A."/>
            <person name="Grossmann A."/>
            <person name="Sourlis C."/>
            <person name="Wowro S."/>
            <person name="Weimann M."/>
            <person name="Will C.L."/>
            <person name="Pena V."/>
            <person name="Luehrmann R."/>
            <person name="Stelzl U."/>
        </authorList>
    </citation>
    <scope>SUBUNIT</scope>
    <scope>INTERACTION WITH SMU1</scope>
</reference>
<reference key="12">
    <citation type="journal article" date="2013" name="Biomark. Res.">
        <title>Nuclear protein IK undergoes dynamic subcellular translocation and forms unique nuclear bodies during the cell cycle.</title>
        <authorList>
            <person name="Hu L."/>
            <person name="Yang F."/>
            <person name="Liu X."/>
            <person name="Xu D."/>
            <person name="Dai W."/>
        </authorList>
    </citation>
    <scope>FUNCTION</scope>
    <scope>SUBCELLULAR LOCATION</scope>
    <scope>INTERACTION WITH DHX15</scope>
</reference>
<reference key="13">
    <citation type="journal article" date="2013" name="J. Proteome Res.">
        <title>Toward a comprehensive characterization of a human cancer cell phosphoproteome.</title>
        <authorList>
            <person name="Zhou H."/>
            <person name="Di Palma S."/>
            <person name="Preisinger C."/>
            <person name="Peng M."/>
            <person name="Polat A.N."/>
            <person name="Heck A.J."/>
            <person name="Mohammed S."/>
        </authorList>
    </citation>
    <scope>PHOSPHORYLATION [LARGE SCALE ANALYSIS] AT SER-287; SER-417 AND SER-536</scope>
    <scope>IDENTIFICATION BY MASS SPECTROMETRY [LARGE SCALE ANALYSIS]</scope>
    <source>
        <tissue>Erythroleukemia</tissue>
    </source>
</reference>
<reference key="14">
    <citation type="journal article" date="2014" name="J. Proteomics">
        <title>An enzyme assisted RP-RPLC approach for in-depth analysis of human liver phosphoproteome.</title>
        <authorList>
            <person name="Bian Y."/>
            <person name="Song C."/>
            <person name="Cheng K."/>
            <person name="Dong M."/>
            <person name="Wang F."/>
            <person name="Huang J."/>
            <person name="Sun D."/>
            <person name="Wang L."/>
            <person name="Ye M."/>
            <person name="Zou H."/>
        </authorList>
    </citation>
    <scope>IDENTIFICATION BY MASS SPECTROMETRY [LARGE SCALE ANALYSIS]</scope>
    <source>
        <tissue>Liver</tissue>
    </source>
</reference>
<reference key="15">
    <citation type="journal article" date="2014" name="Nat. Struct. Mol. Biol.">
        <title>Uncovering global SUMOylation signaling networks in a site-specific manner.</title>
        <authorList>
            <person name="Hendriks I.A."/>
            <person name="D'Souza R.C."/>
            <person name="Yang B."/>
            <person name="Verlaan-de Vries M."/>
            <person name="Mann M."/>
            <person name="Vertegaal A.C."/>
        </authorList>
    </citation>
    <scope>SUMOYLATION [LARGE SCALE ANALYSIS] AT LYS-544</scope>
    <scope>IDENTIFICATION BY MASS SPECTROMETRY [LARGE SCALE ANALYSIS]</scope>
</reference>
<reference key="16">
    <citation type="journal article" date="2014" name="PLoS Pathog.">
        <title>Recruitment of RED-SMU1 complex by Influenza A Virus RNA polymerase to control Viral mRNA splicing.</title>
        <authorList>
            <person name="Fournier G."/>
            <person name="Chiang C."/>
            <person name="Munier S."/>
            <person name="Tomoiu A."/>
            <person name="Demeret C."/>
            <person name="Vidalain P.O."/>
            <person name="Jacob Y."/>
            <person name="Naffakh N."/>
        </authorList>
    </citation>
    <scope>FUNCTION (MICROBIAL INFECTION)</scope>
    <scope>INTERACTION WITH SMU1</scope>
    <scope>INTERACTION (MICROBIAL INFECTION) WITH INFLUENZA A VIRUS RNA POLYMERASE SUBUNITS PB1 AND PB2</scope>
    <scope>SUBCELLULAR LOCATION</scope>
</reference>
<reference key="17">
    <citation type="journal article" date="2017" name="Nat. Struct. Mol. Biol.">
        <title>Site-specific mapping of the human SUMO proteome reveals co-modification with phosphorylation.</title>
        <authorList>
            <person name="Hendriks I.A."/>
            <person name="Lyon D."/>
            <person name="Young C."/>
            <person name="Jensen L.J."/>
            <person name="Vertegaal A.C."/>
            <person name="Nielsen M.L."/>
        </authorList>
    </citation>
    <scope>SUMOYLATION [LARGE SCALE ANALYSIS] AT LYS-151; LYS-310; LYS-331; LYS-386; LYS-388; LYS-404; LYS-408; LYS-496; LYS-501; LYS-509; LYS-541; LYS-543; LYS-544 AND LYS-553</scope>
    <scope>IDENTIFICATION BY MASS SPECTROMETRY [LARGE SCALE ANALYSIS]</scope>
</reference>
<reference evidence="15" key="18">
    <citation type="journal article" date="2017" name="Cell">
        <title>Cryo-EM Structure of a Pre-catalytic Human Spliceosome Primed for Activation.</title>
        <authorList>
            <person name="Bertram K."/>
            <person name="Agafonov D.E."/>
            <person name="Dybkov O."/>
            <person name="Haselbach D."/>
            <person name="Leelaram M.N."/>
            <person name="Will C.L."/>
            <person name="Urlaub H."/>
            <person name="Kastner B."/>
            <person name="Luhrmann R."/>
            <person name="Stark H."/>
        </authorList>
    </citation>
    <scope>STRUCTURE BY ELECTRON MICROSCOPY (4.50 ANGSTROMS)</scope>
    <scope>FUNCTION</scope>
    <scope>SUBUNIT</scope>
    <scope>SUBCELLULAR LOCATION</scope>
    <scope>IDENTIFICATION BY MASS SPECTROMETRY</scope>
</reference>
<sequence>MPERDSEPFSNPLAPDGHDVDDPHSFHQSKLTNEDFRKLLMTPRAAPTSAPPSKSRHHEMPREYNEDEDPAARRRKKKSYYAKLRQQEIERERELAEKYRDRAKERRDGVNKDYEETELISTTANYRAVGPTAEADKSAAEKRRQLIQESKFLGGDMEHTHLVKGLDFALLQKVRAEIASKEKEEEELMEKPQKETKKDEDPENKIEFKTRLGRNVYRMLFKSKAYERNELFLPGRMAYVVDLDDEYADTDIPTTLIRSKADCPTMEAQTTLTTNDIVISKLTQILSYLRQGTRNKKLKKKDKGKLEEKKPPEADMNIFEDIGDYVPSTTKTPRDKERERYRERERDRERDRDRDRERERERDRERERERDREREEEKKRHSYFEKPKVDDEPMDVDKGPGSTKELIKSINEKFAGSAGWEGTESLKKPEDKKQLGDFFGMSNSYAECYPATMDDMAVDSDEEVDYSKMDQGNKKGPLGRWDFDTQEEYSEYMNNKEALPKAAFQYGIKMSEGRKTRRFKETNDKAELDRQWKKISAIIEKRKKMEADGVEVKRPKY</sequence>
<keyword id="KW-0002">3D-structure</keyword>
<keyword id="KW-0007">Acetylation</keyword>
<keyword id="KW-0158">Chromosome</keyword>
<keyword id="KW-0963">Cytoplasm</keyword>
<keyword id="KW-0206">Cytoskeleton</keyword>
<keyword id="KW-0945">Host-virus interaction</keyword>
<keyword id="KW-1017">Isopeptide bond</keyword>
<keyword id="KW-0507">mRNA processing</keyword>
<keyword id="KW-0508">mRNA splicing</keyword>
<keyword id="KW-0539">Nucleus</keyword>
<keyword id="KW-0597">Phosphoprotein</keyword>
<keyword id="KW-1267">Proteomics identification</keyword>
<keyword id="KW-1185">Reference proteome</keyword>
<keyword id="KW-0677">Repeat</keyword>
<keyword id="KW-0747">Spliceosome</keyword>
<keyword id="KW-0832">Ubl conjugation</keyword>
<name>RED_HUMAN</name>